<organism>
    <name type="scientific">Shewanella woodyi (strain ATCC 51908 / MS32)</name>
    <dbReference type="NCBI Taxonomy" id="392500"/>
    <lineage>
        <taxon>Bacteria</taxon>
        <taxon>Pseudomonadati</taxon>
        <taxon>Pseudomonadota</taxon>
        <taxon>Gammaproteobacteria</taxon>
        <taxon>Alteromonadales</taxon>
        <taxon>Shewanellaceae</taxon>
        <taxon>Shewanella</taxon>
    </lineage>
</organism>
<dbReference type="EC" id="2.1.1.181" evidence="1"/>
<dbReference type="EMBL" id="CP000961">
    <property type="protein sequence ID" value="ACA89073.1"/>
    <property type="molecule type" value="Genomic_DNA"/>
</dbReference>
<dbReference type="RefSeq" id="WP_012327390.1">
    <property type="nucleotide sequence ID" value="NC_010506.1"/>
</dbReference>
<dbReference type="SMR" id="B1KP42"/>
<dbReference type="STRING" id="392500.Swoo_4824"/>
<dbReference type="KEGG" id="swd:Swoo_4824"/>
<dbReference type="eggNOG" id="COG3129">
    <property type="taxonomic scope" value="Bacteria"/>
</dbReference>
<dbReference type="HOGENOM" id="CLU_027534_3_0_6"/>
<dbReference type="Proteomes" id="UP000002168">
    <property type="component" value="Chromosome"/>
</dbReference>
<dbReference type="GO" id="GO:0005737">
    <property type="term" value="C:cytoplasm"/>
    <property type="evidence" value="ECO:0007669"/>
    <property type="project" value="UniProtKB-SubCell"/>
</dbReference>
<dbReference type="GO" id="GO:0052907">
    <property type="term" value="F:23S rRNA (adenine(1618)-N(6))-methyltransferase activity"/>
    <property type="evidence" value="ECO:0007669"/>
    <property type="project" value="UniProtKB-EC"/>
</dbReference>
<dbReference type="GO" id="GO:0070475">
    <property type="term" value="P:rRNA base methylation"/>
    <property type="evidence" value="ECO:0007669"/>
    <property type="project" value="TreeGrafter"/>
</dbReference>
<dbReference type="CDD" id="cd02440">
    <property type="entry name" value="AdoMet_MTases"/>
    <property type="match status" value="1"/>
</dbReference>
<dbReference type="Gene3D" id="3.40.50.150">
    <property type="entry name" value="Vaccinia Virus protein VP39"/>
    <property type="match status" value="1"/>
</dbReference>
<dbReference type="HAMAP" id="MF_01848">
    <property type="entry name" value="23SrRNA_methyltr_F"/>
    <property type="match status" value="1"/>
</dbReference>
<dbReference type="InterPro" id="IPR010286">
    <property type="entry name" value="METTL16/RlmF"/>
</dbReference>
<dbReference type="InterPro" id="IPR016909">
    <property type="entry name" value="rRNA_lsu_MeTfrase_F"/>
</dbReference>
<dbReference type="InterPro" id="IPR029063">
    <property type="entry name" value="SAM-dependent_MTases_sf"/>
</dbReference>
<dbReference type="NCBIfam" id="NF008725">
    <property type="entry name" value="PRK11727.1"/>
    <property type="match status" value="1"/>
</dbReference>
<dbReference type="PANTHER" id="PTHR13393:SF0">
    <property type="entry name" value="RNA N6-ADENOSINE-METHYLTRANSFERASE METTL16"/>
    <property type="match status" value="1"/>
</dbReference>
<dbReference type="PANTHER" id="PTHR13393">
    <property type="entry name" value="SAM-DEPENDENT METHYLTRANSFERASE"/>
    <property type="match status" value="1"/>
</dbReference>
<dbReference type="Pfam" id="PF05971">
    <property type="entry name" value="Methyltransf_10"/>
    <property type="match status" value="2"/>
</dbReference>
<dbReference type="PIRSF" id="PIRSF029038">
    <property type="entry name" value="Mtase_YbiN_prd"/>
    <property type="match status" value="1"/>
</dbReference>
<dbReference type="SUPFAM" id="SSF53335">
    <property type="entry name" value="S-adenosyl-L-methionine-dependent methyltransferases"/>
    <property type="match status" value="1"/>
</dbReference>
<accession>B1KP42</accession>
<proteinExistence type="inferred from homology"/>
<comment type="function">
    <text evidence="1">Specifically methylates the adenine in position 1618 of 23S rRNA.</text>
</comment>
<comment type="catalytic activity">
    <reaction evidence="1">
        <text>adenosine(1618) in 23S rRNA + S-adenosyl-L-methionine = N(6)-methyladenosine(1618) in 23S rRNA + S-adenosyl-L-homocysteine + H(+)</text>
        <dbReference type="Rhea" id="RHEA:16497"/>
        <dbReference type="Rhea" id="RHEA-COMP:10229"/>
        <dbReference type="Rhea" id="RHEA-COMP:10231"/>
        <dbReference type="ChEBI" id="CHEBI:15378"/>
        <dbReference type="ChEBI" id="CHEBI:57856"/>
        <dbReference type="ChEBI" id="CHEBI:59789"/>
        <dbReference type="ChEBI" id="CHEBI:74411"/>
        <dbReference type="ChEBI" id="CHEBI:74449"/>
        <dbReference type="EC" id="2.1.1.181"/>
    </reaction>
</comment>
<comment type="subcellular location">
    <subcellularLocation>
        <location evidence="1">Cytoplasm</location>
    </subcellularLocation>
</comment>
<comment type="similarity">
    <text evidence="1">Belongs to the methyltransferase superfamily. METTL16/RlmF family.</text>
</comment>
<feature type="chain" id="PRO_0000349966" description="Ribosomal RNA large subunit methyltransferase F">
    <location>
        <begin position="1"/>
        <end position="382"/>
    </location>
</feature>
<feature type="region of interest" description="Disordered" evidence="2">
    <location>
        <begin position="1"/>
        <end position="53"/>
    </location>
</feature>
<feature type="region of interest" description="Disordered" evidence="2">
    <location>
        <begin position="269"/>
        <end position="288"/>
    </location>
</feature>
<feature type="compositionally biased region" description="Basic residues" evidence="2">
    <location>
        <begin position="8"/>
        <end position="24"/>
    </location>
</feature>
<feature type="compositionally biased region" description="Basic and acidic residues" evidence="2">
    <location>
        <begin position="269"/>
        <end position="286"/>
    </location>
</feature>
<sequence length="382" mass="42595">MTKPSSKASRKPVTKSGRNSKRSRSGSSKGDAQVARAINNQKPGLHPRNLHRDGYDFDKLTKVSPVLTPYVQPNPYGNLSIDFADPQAVKALNAAILKLDYQIDNWDIPEGFLCPPIPGRVDYLHYIYDLLAGVEEFENKSETEMEGQNVPPVNSHTIKPKKMKIKALDIGTGANAIYPLLGIQTYGWRFVASDVDPISLANVKAIVEGNNCLLGKLEVRLQNDHQKVFSGIIKPDDRFDITLCNPPFHASLKEASEGSQRKLKNLAENRASKGHKLEPKAPKDKSQLNFGGQKAELWCEGGEKQFLHNMICESKVFATQCLWFTSLVSKKENLEACYTELKRVGAITVKTIDMAQGNKLTRVLAWSFLTPSQRGLWAKYRS</sequence>
<gene>
    <name evidence="1" type="primary">rlmF</name>
    <name type="ordered locus">Swoo_4824</name>
</gene>
<evidence type="ECO:0000255" key="1">
    <source>
        <dbReference type="HAMAP-Rule" id="MF_01848"/>
    </source>
</evidence>
<evidence type="ECO:0000256" key="2">
    <source>
        <dbReference type="SAM" id="MobiDB-lite"/>
    </source>
</evidence>
<reference key="1">
    <citation type="submission" date="2008-02" db="EMBL/GenBank/DDBJ databases">
        <title>Complete sequence of Shewanella woodyi ATCC 51908.</title>
        <authorList>
            <consortium name="US DOE Joint Genome Institute"/>
            <person name="Copeland A."/>
            <person name="Lucas S."/>
            <person name="Lapidus A."/>
            <person name="Glavina del Rio T."/>
            <person name="Dalin E."/>
            <person name="Tice H."/>
            <person name="Bruce D."/>
            <person name="Goodwin L."/>
            <person name="Pitluck S."/>
            <person name="Sims D."/>
            <person name="Brettin T."/>
            <person name="Detter J.C."/>
            <person name="Han C."/>
            <person name="Kuske C.R."/>
            <person name="Schmutz J."/>
            <person name="Larimer F."/>
            <person name="Land M."/>
            <person name="Hauser L."/>
            <person name="Kyrpides N."/>
            <person name="Lykidis A."/>
            <person name="Zhao J.-S."/>
            <person name="Richardson P."/>
        </authorList>
    </citation>
    <scope>NUCLEOTIDE SEQUENCE [LARGE SCALE GENOMIC DNA]</scope>
    <source>
        <strain>ATCC 51908 / MS32</strain>
    </source>
</reference>
<protein>
    <recommendedName>
        <fullName evidence="1">Ribosomal RNA large subunit methyltransferase F</fullName>
        <ecNumber evidence="1">2.1.1.181</ecNumber>
    </recommendedName>
    <alternativeName>
        <fullName evidence="1">23S rRNA mA1618 methyltransferase</fullName>
    </alternativeName>
    <alternativeName>
        <fullName evidence="1">rRNA adenine N-6-methyltransferase</fullName>
    </alternativeName>
</protein>
<name>RLMF_SHEWM</name>
<keyword id="KW-0963">Cytoplasm</keyword>
<keyword id="KW-0489">Methyltransferase</keyword>
<keyword id="KW-1185">Reference proteome</keyword>
<keyword id="KW-0698">rRNA processing</keyword>
<keyword id="KW-0949">S-adenosyl-L-methionine</keyword>
<keyword id="KW-0808">Transferase</keyword>